<organism>
    <name type="scientific">Escherichia coli</name>
    <dbReference type="NCBI Taxonomy" id="562"/>
    <lineage>
        <taxon>Bacteria</taxon>
        <taxon>Pseudomonadati</taxon>
        <taxon>Pseudomonadota</taxon>
        <taxon>Gammaproteobacteria</taxon>
        <taxon>Enterobacterales</taxon>
        <taxon>Enterobacteriaceae</taxon>
        <taxon>Escherichia</taxon>
    </lineage>
</organism>
<comment type="function">
    <text evidence="1">Component of the type II secretion system required for the energy-dependent secretion of extracellular factors such as proteases and toxins from the periplasm. Part of the pseudopilus tip complex that is critical for the recognition and binding of secretion substrates.</text>
</comment>
<comment type="subunit">
    <text evidence="1 4">Type II secretion is composed of four main components: the outer membrane complex, the inner membrane complex, the cytoplasmic secretion ATPase and the periplasm-spanning pseudopilus. Interacts with core component GspG (By similarity). Interacts with pseudopilins GspJ and GspK (PubMed:18438417).</text>
</comment>
<comment type="interaction">
    <interactant intactId="EBI-9009622">
        <id>Q8VPC3</id>
    </interactant>
    <interactant intactId="EBI-15699424">
        <id>Q8VRM4</id>
        <label>gspJ</label>
    </interactant>
    <organismsDiffer>false</organismsDiffer>
    <experiments>3</experiments>
</comment>
<comment type="subcellular location">
    <subcellularLocation>
        <location evidence="1">Cell inner membrane</location>
        <topology evidence="2">Single-pass membrane protein</topology>
    </subcellularLocation>
</comment>
<comment type="PTM">
    <text evidence="1">Cleaved by prepilin peptidase.</text>
</comment>
<comment type="PTM">
    <text evidence="1">Methylated by prepilin peptidase at the amino group of the N-terminal phenylalanine once the leader sequence is cleaved by prepilin peptidase.</text>
</comment>
<comment type="similarity">
    <text evidence="5">Belongs to the GSP I family.</text>
</comment>
<accession>Q8VPC3</accession>
<sequence>MKRGFTLLEVMLALAIFALSATAVLQIASGALSNQHVLEEKTVAGWVAENQTALLYLMTRGQRAVRQQGESDMAGSRWYWRTTPLSTGNALLQAVDIEVSLHEDFSSVIQSRRAWFSAVGGQQ</sequence>
<dbReference type="EMBL" id="AY056599">
    <property type="protein sequence ID" value="AAL10698.1"/>
    <property type="molecule type" value="Genomic_DNA"/>
</dbReference>
<dbReference type="RefSeq" id="WP_000820137.1">
    <property type="nucleotide sequence ID" value="NZ_NKEH01000021.1"/>
</dbReference>
<dbReference type="PDB" id="3CI0">
    <property type="method" value="X-ray"/>
    <property type="resolution" value="2.20 A"/>
    <property type="chains" value="I=33-118"/>
</dbReference>
<dbReference type="PDBsum" id="3CI0"/>
<dbReference type="SMR" id="Q8VPC3"/>
<dbReference type="DIP" id="DIP-46384N"/>
<dbReference type="IntAct" id="Q8VPC3">
    <property type="interactions" value="2"/>
</dbReference>
<dbReference type="PATRIC" id="fig|562.7244.peg.3592"/>
<dbReference type="EvolutionaryTrace" id="Q8VPC3"/>
<dbReference type="GO" id="GO:0005886">
    <property type="term" value="C:plasma membrane"/>
    <property type="evidence" value="ECO:0007669"/>
    <property type="project" value="UniProtKB-SubCell"/>
</dbReference>
<dbReference type="GO" id="GO:0015627">
    <property type="term" value="C:type II protein secretion system complex"/>
    <property type="evidence" value="ECO:0007669"/>
    <property type="project" value="InterPro"/>
</dbReference>
<dbReference type="GO" id="GO:0015628">
    <property type="term" value="P:protein secretion by the type II secretion system"/>
    <property type="evidence" value="ECO:0007669"/>
    <property type="project" value="InterPro"/>
</dbReference>
<dbReference type="Gene3D" id="3.30.1300.30">
    <property type="entry name" value="GSPII I/J protein-like"/>
    <property type="match status" value="1"/>
</dbReference>
<dbReference type="InterPro" id="IPR012902">
    <property type="entry name" value="N_methyl_site"/>
</dbReference>
<dbReference type="InterPro" id="IPR045584">
    <property type="entry name" value="Pilin-like"/>
</dbReference>
<dbReference type="InterPro" id="IPR003413">
    <property type="entry name" value="T2SS_GspI_C"/>
</dbReference>
<dbReference type="InterPro" id="IPR010052">
    <property type="entry name" value="T2SS_protein-GspI"/>
</dbReference>
<dbReference type="NCBIfam" id="TIGR01707">
    <property type="entry name" value="gspI"/>
    <property type="match status" value="1"/>
</dbReference>
<dbReference type="NCBIfam" id="TIGR02532">
    <property type="entry name" value="IV_pilin_GFxxxE"/>
    <property type="match status" value="1"/>
</dbReference>
<dbReference type="PANTHER" id="PTHR38779">
    <property type="entry name" value="TYPE II SECRETION SYSTEM PROTEIN I-RELATED"/>
    <property type="match status" value="1"/>
</dbReference>
<dbReference type="PANTHER" id="PTHR38779:SF2">
    <property type="entry name" value="TYPE II SECRETION SYSTEM PROTEIN I-RELATED"/>
    <property type="match status" value="1"/>
</dbReference>
<dbReference type="Pfam" id="PF07963">
    <property type="entry name" value="N_methyl"/>
    <property type="match status" value="1"/>
</dbReference>
<dbReference type="Pfam" id="PF02501">
    <property type="entry name" value="T2SSI"/>
    <property type="match status" value="1"/>
</dbReference>
<dbReference type="SUPFAM" id="SSF54523">
    <property type="entry name" value="Pili subunits"/>
    <property type="match status" value="1"/>
</dbReference>
<dbReference type="PROSITE" id="PS00409">
    <property type="entry name" value="PROKAR_NTER_METHYL"/>
    <property type="match status" value="1"/>
</dbReference>
<protein>
    <recommendedName>
        <fullName>Type II secretion system protein I</fullName>
        <shortName>T2SS minor pseudopilin I</shortName>
    </recommendedName>
    <alternativeName>
        <fullName>Putative general secretion pathway protein I</fullName>
    </alternativeName>
</protein>
<gene>
    <name type="primary">gspI</name>
</gene>
<proteinExistence type="evidence at protein level"/>
<name>GSPI_ECOLX</name>
<evidence type="ECO:0000250" key="1">
    <source>
        <dbReference type="UniProtKB" id="Q00516"/>
    </source>
</evidence>
<evidence type="ECO:0000255" key="2"/>
<evidence type="ECO:0000255" key="3">
    <source>
        <dbReference type="PROSITE-ProRule" id="PRU01070"/>
    </source>
</evidence>
<evidence type="ECO:0000269" key="4">
    <source>
    </source>
</evidence>
<evidence type="ECO:0000305" key="5"/>
<evidence type="ECO:0007829" key="6">
    <source>
        <dbReference type="PDB" id="3CI0"/>
    </source>
</evidence>
<keyword id="KW-0002">3D-structure</keyword>
<keyword id="KW-0997">Cell inner membrane</keyword>
<keyword id="KW-1003">Cell membrane</keyword>
<keyword id="KW-0472">Membrane</keyword>
<keyword id="KW-0488">Methylation</keyword>
<keyword id="KW-0812">Transmembrane</keyword>
<keyword id="KW-1133">Transmembrane helix</keyword>
<reference key="1">
    <citation type="journal article" date="2002" name="Proc. Natl. Acad. Sci. U.S.A.">
        <title>Identification of a protein secretory pathway for the secretion of heat-labile enterotoxin by an enterotoxigenic strain of Escherichia coli.</title>
        <authorList>
            <person name="Tauschek M."/>
            <person name="Gorrell R.J."/>
            <person name="Strugnell R.A."/>
            <person name="Robins-Browne R.M."/>
        </authorList>
    </citation>
    <scope>NUCLEOTIDE SEQUENCE [GENOMIC DNA]</scope>
    <source>
        <strain>H10407</strain>
    </source>
</reference>
<reference key="2">
    <citation type="journal article" date="2008" name="Nat. Struct. Mol. Biol.">
        <title>Structure of the GspK-GspI-GspJ complex from the enterotoxigenic Escherichia coli type 2 secretion system.</title>
        <authorList>
            <person name="Korotkov K.V."/>
            <person name="Hol W.G."/>
        </authorList>
    </citation>
    <scope>X-RAY CRYSTALLOGRAPHY (2.20 ANGSTROMS) OF 33-118</scope>
    <scope>INTERACTION WITH GSPK AND GSPJ</scope>
</reference>
<feature type="propeptide" id="PRO_0000449545" description="Leader sequence" evidence="3">
    <location>
        <begin position="1"/>
        <end position="4"/>
    </location>
</feature>
<feature type="chain" id="PRO_0000449546" description="Type II secretion system protein I">
    <location>
        <begin position="5"/>
        <end position="123"/>
    </location>
</feature>
<feature type="transmembrane region" description="Helical" evidence="2">
    <location>
        <begin position="5"/>
        <end position="25"/>
    </location>
</feature>
<feature type="modified residue" description="N-methylphenylalanine" evidence="3">
    <location>
        <position position="5"/>
    </location>
</feature>
<feature type="helix" evidence="6">
    <location>
        <begin position="36"/>
        <end position="57"/>
    </location>
</feature>
<feature type="helix" evidence="6">
    <location>
        <begin position="60"/>
        <end position="63"/>
    </location>
</feature>
<feature type="strand" evidence="6">
    <location>
        <begin position="67"/>
        <end position="73"/>
    </location>
</feature>
<feature type="strand" evidence="6">
    <location>
        <begin position="76"/>
        <end position="85"/>
    </location>
</feature>
<feature type="strand" evidence="6">
    <location>
        <begin position="93"/>
        <end position="102"/>
    </location>
</feature>
<feature type="strand" evidence="6">
    <location>
        <begin position="107"/>
        <end position="116"/>
    </location>
</feature>